<gene>
    <name evidence="1" type="primary">serC</name>
    <name type="ordered locus">Mmcs_4464</name>
</gene>
<proteinExistence type="inferred from homology"/>
<keyword id="KW-0028">Amino-acid biosynthesis</keyword>
<keyword id="KW-0032">Aminotransferase</keyword>
<keyword id="KW-0963">Cytoplasm</keyword>
<keyword id="KW-0663">Pyridoxal phosphate</keyword>
<keyword id="KW-0664">Pyridoxine biosynthesis</keyword>
<keyword id="KW-0718">Serine biosynthesis</keyword>
<keyword id="KW-0808">Transferase</keyword>
<feature type="chain" id="PRO_0000293588" description="Putative phosphoserine aminotransferase">
    <location>
        <begin position="1"/>
        <end position="370"/>
    </location>
</feature>
<feature type="region of interest" description="Disordered" evidence="2">
    <location>
        <begin position="1"/>
        <end position="22"/>
    </location>
</feature>
<feature type="binding site" evidence="1">
    <location>
        <position position="44"/>
    </location>
    <ligand>
        <name>L-glutamate</name>
        <dbReference type="ChEBI" id="CHEBI:29985"/>
    </ligand>
</feature>
<feature type="binding site" evidence="1">
    <location>
        <position position="102"/>
    </location>
    <ligand>
        <name>pyridoxal 5'-phosphate</name>
        <dbReference type="ChEBI" id="CHEBI:597326"/>
    </ligand>
</feature>
<feature type="binding site" evidence="1">
    <location>
        <position position="148"/>
    </location>
    <ligand>
        <name>pyridoxal 5'-phosphate</name>
        <dbReference type="ChEBI" id="CHEBI:597326"/>
    </ligand>
</feature>
<feature type="binding site" evidence="1">
    <location>
        <position position="170"/>
    </location>
    <ligand>
        <name>pyridoxal 5'-phosphate</name>
        <dbReference type="ChEBI" id="CHEBI:597326"/>
    </ligand>
</feature>
<feature type="binding site" evidence="1">
    <location>
        <position position="193"/>
    </location>
    <ligand>
        <name>pyridoxal 5'-phosphate</name>
        <dbReference type="ChEBI" id="CHEBI:597326"/>
    </ligand>
</feature>
<feature type="binding site" evidence="1">
    <location>
        <begin position="245"/>
        <end position="246"/>
    </location>
    <ligand>
        <name>pyridoxal 5'-phosphate</name>
        <dbReference type="ChEBI" id="CHEBI:597326"/>
    </ligand>
</feature>
<feature type="modified residue" description="N6-(pyridoxal phosphate)lysine" evidence="1">
    <location>
        <position position="194"/>
    </location>
</feature>
<name>SERC_MYCSS</name>
<dbReference type="EC" id="2.6.1.52" evidence="1"/>
<dbReference type="EMBL" id="CP000384">
    <property type="protein sequence ID" value="ABG10568.1"/>
    <property type="molecule type" value="Genomic_DNA"/>
</dbReference>
<dbReference type="SMR" id="Q1B3G6"/>
<dbReference type="KEGG" id="mmc:Mmcs_4464"/>
<dbReference type="HOGENOM" id="CLU_061974_0_0_11"/>
<dbReference type="BioCyc" id="MSP164756:G1G6O-4561-MONOMER"/>
<dbReference type="UniPathway" id="UPA00135">
    <property type="reaction ID" value="UER00197"/>
</dbReference>
<dbReference type="UniPathway" id="UPA00244">
    <property type="reaction ID" value="UER00311"/>
</dbReference>
<dbReference type="GO" id="GO:0005737">
    <property type="term" value="C:cytoplasm"/>
    <property type="evidence" value="ECO:0007669"/>
    <property type="project" value="UniProtKB-SubCell"/>
</dbReference>
<dbReference type="GO" id="GO:0008453">
    <property type="term" value="F:alanine-glyoxylate transaminase activity"/>
    <property type="evidence" value="ECO:0007669"/>
    <property type="project" value="TreeGrafter"/>
</dbReference>
<dbReference type="GO" id="GO:0004760">
    <property type="term" value="F:L-serine-pyruvate transaminase activity"/>
    <property type="evidence" value="ECO:0007669"/>
    <property type="project" value="TreeGrafter"/>
</dbReference>
<dbReference type="GO" id="GO:0004648">
    <property type="term" value="F:O-phospho-L-serine:2-oxoglutarate aminotransferase activity"/>
    <property type="evidence" value="ECO:0007669"/>
    <property type="project" value="UniProtKB-UniRule"/>
</dbReference>
<dbReference type="GO" id="GO:0030170">
    <property type="term" value="F:pyridoxal phosphate binding"/>
    <property type="evidence" value="ECO:0007669"/>
    <property type="project" value="UniProtKB-UniRule"/>
</dbReference>
<dbReference type="GO" id="GO:0019265">
    <property type="term" value="P:glycine biosynthetic process, by transamination of glyoxylate"/>
    <property type="evidence" value="ECO:0007669"/>
    <property type="project" value="TreeGrafter"/>
</dbReference>
<dbReference type="GO" id="GO:0006564">
    <property type="term" value="P:L-serine biosynthetic process"/>
    <property type="evidence" value="ECO:0007669"/>
    <property type="project" value="UniProtKB-UniRule"/>
</dbReference>
<dbReference type="GO" id="GO:0008615">
    <property type="term" value="P:pyridoxine biosynthetic process"/>
    <property type="evidence" value="ECO:0007669"/>
    <property type="project" value="UniProtKB-UniRule"/>
</dbReference>
<dbReference type="Gene3D" id="3.90.1150.10">
    <property type="entry name" value="Aspartate Aminotransferase, domain 1"/>
    <property type="match status" value="1"/>
</dbReference>
<dbReference type="Gene3D" id="3.40.640.10">
    <property type="entry name" value="Type I PLP-dependent aspartate aminotransferase-like (Major domain)"/>
    <property type="match status" value="1"/>
</dbReference>
<dbReference type="HAMAP" id="MF_00160">
    <property type="entry name" value="SerC_aminotrans_5"/>
    <property type="match status" value="1"/>
</dbReference>
<dbReference type="InterPro" id="IPR000192">
    <property type="entry name" value="Aminotrans_V_dom"/>
</dbReference>
<dbReference type="InterPro" id="IPR022278">
    <property type="entry name" value="Pser_aminoTfrase"/>
</dbReference>
<dbReference type="InterPro" id="IPR006272">
    <property type="entry name" value="Pser_aminoTfrase_mycobac"/>
</dbReference>
<dbReference type="InterPro" id="IPR015424">
    <property type="entry name" value="PyrdxlP-dep_Trfase"/>
</dbReference>
<dbReference type="InterPro" id="IPR015421">
    <property type="entry name" value="PyrdxlP-dep_Trfase_major"/>
</dbReference>
<dbReference type="InterPro" id="IPR015422">
    <property type="entry name" value="PyrdxlP-dep_Trfase_small"/>
</dbReference>
<dbReference type="NCBIfam" id="TIGR01366">
    <property type="entry name" value="serC_3"/>
    <property type="match status" value="1"/>
</dbReference>
<dbReference type="PANTHER" id="PTHR21152:SF40">
    <property type="entry name" value="ALANINE--GLYOXYLATE AMINOTRANSFERASE"/>
    <property type="match status" value="1"/>
</dbReference>
<dbReference type="PANTHER" id="PTHR21152">
    <property type="entry name" value="AMINOTRANSFERASE CLASS V"/>
    <property type="match status" value="1"/>
</dbReference>
<dbReference type="Pfam" id="PF00266">
    <property type="entry name" value="Aminotran_5"/>
    <property type="match status" value="1"/>
</dbReference>
<dbReference type="PIRSF" id="PIRSF000525">
    <property type="entry name" value="SerC"/>
    <property type="match status" value="1"/>
</dbReference>
<dbReference type="SUPFAM" id="SSF53383">
    <property type="entry name" value="PLP-dependent transferases"/>
    <property type="match status" value="1"/>
</dbReference>
<comment type="function">
    <text evidence="1">Catalyzes the reversible conversion of 3-phosphohydroxypyruvate to phosphoserine and of 3-hydroxy-2-oxo-4-phosphonooxybutanoate to phosphohydroxythreonine.</text>
</comment>
<comment type="catalytic activity">
    <reaction evidence="1">
        <text>O-phospho-L-serine + 2-oxoglutarate = 3-phosphooxypyruvate + L-glutamate</text>
        <dbReference type="Rhea" id="RHEA:14329"/>
        <dbReference type="ChEBI" id="CHEBI:16810"/>
        <dbReference type="ChEBI" id="CHEBI:18110"/>
        <dbReference type="ChEBI" id="CHEBI:29985"/>
        <dbReference type="ChEBI" id="CHEBI:57524"/>
        <dbReference type="EC" id="2.6.1.52"/>
    </reaction>
</comment>
<comment type="catalytic activity">
    <reaction evidence="1">
        <text>4-(phosphooxy)-L-threonine + 2-oxoglutarate = (R)-3-hydroxy-2-oxo-4-phosphooxybutanoate + L-glutamate</text>
        <dbReference type="Rhea" id="RHEA:16573"/>
        <dbReference type="ChEBI" id="CHEBI:16810"/>
        <dbReference type="ChEBI" id="CHEBI:29985"/>
        <dbReference type="ChEBI" id="CHEBI:58452"/>
        <dbReference type="ChEBI" id="CHEBI:58538"/>
        <dbReference type="EC" id="2.6.1.52"/>
    </reaction>
</comment>
<comment type="cofactor">
    <cofactor evidence="1">
        <name>pyridoxal 5'-phosphate</name>
        <dbReference type="ChEBI" id="CHEBI:597326"/>
    </cofactor>
    <text evidence="1">Binds 1 pyridoxal phosphate per subunit.</text>
</comment>
<comment type="pathway">
    <text evidence="1">Amino-acid biosynthesis; L-serine biosynthesis; L-serine from 3-phospho-D-glycerate: step 2/3.</text>
</comment>
<comment type="pathway">
    <text evidence="1">Cofactor biosynthesis; pyridoxine 5'-phosphate biosynthesis; pyridoxine 5'-phosphate from D-erythrose 4-phosphate: step 3/5.</text>
</comment>
<comment type="subunit">
    <text evidence="1">Homodimer.</text>
</comment>
<comment type="subcellular location">
    <subcellularLocation>
        <location evidence="1">Cytoplasm</location>
    </subcellularLocation>
</comment>
<comment type="similarity">
    <text evidence="1">Belongs to the class-V pyridoxal-phosphate-dependent aminotransferase family. SerC subfamily.</text>
</comment>
<organism>
    <name type="scientific">Mycobacterium sp. (strain MCS)</name>
    <dbReference type="NCBI Taxonomy" id="164756"/>
    <lineage>
        <taxon>Bacteria</taxon>
        <taxon>Bacillati</taxon>
        <taxon>Actinomycetota</taxon>
        <taxon>Actinomycetes</taxon>
        <taxon>Mycobacteriales</taxon>
        <taxon>Mycobacteriaceae</taxon>
        <taxon>Mycobacterium</taxon>
    </lineage>
</organism>
<evidence type="ECO:0000255" key="1">
    <source>
        <dbReference type="HAMAP-Rule" id="MF_00160"/>
    </source>
</evidence>
<evidence type="ECO:0000256" key="2">
    <source>
        <dbReference type="SAM" id="MobiDB-lite"/>
    </source>
</evidence>
<reference key="1">
    <citation type="submission" date="2006-06" db="EMBL/GenBank/DDBJ databases">
        <title>Complete sequence of chromosome of Mycobacterium sp. MCS.</title>
        <authorList>
            <consortium name="US DOE Joint Genome Institute"/>
            <person name="Copeland A."/>
            <person name="Lucas S."/>
            <person name="Lapidus A."/>
            <person name="Barry K."/>
            <person name="Detter J.C."/>
            <person name="Glavina del Rio T."/>
            <person name="Hammon N."/>
            <person name="Israni S."/>
            <person name="Dalin E."/>
            <person name="Tice H."/>
            <person name="Pitluck S."/>
            <person name="Martinez M."/>
            <person name="Schmutz J."/>
            <person name="Larimer F."/>
            <person name="Land M."/>
            <person name="Hauser L."/>
            <person name="Kyrpides N."/>
            <person name="Kim E."/>
            <person name="Miller C.D."/>
            <person name="Hughes J.E."/>
            <person name="Anderson A.J."/>
            <person name="Sims R.C."/>
            <person name="Richardson P."/>
        </authorList>
    </citation>
    <scope>NUCLEOTIDE SEQUENCE [LARGE SCALE GENOMIC DNA]</scope>
    <source>
        <strain>MCS</strain>
    </source>
</reference>
<sequence>MAELTIPADLKPRDGRFGSGPSKVRPEQLQALAAAGDLFGTSHRQAPVKNLVGRVRDGIKQLFSVPEGYDVILGNGGSTAFWDAAAFGLIDKRSLHLTYGEFSAKFASAVAKNPFVGDPIVVKADPGSAPEPQSDPSVDVIAWAHNETSTGVAVPVQRPADSGDALIVIDATSGAGGLPVDIAQADAYYFAPQKNFAGDGGLWLAVVSPAALARIEAIGQSGRWVPDFLSLPIAVENSLKNQTYNTPAIGTLVLLADQLDWLNGNGGLDWAVKRTADSSQRLYSWAEASSYATPFVTDPALRSQVVGTIDFADDVDAAAVAKVLRANGIVDTEPYRKLGRNQLRVAMFAAVDPEDVSALTRCVDWVVERL</sequence>
<protein>
    <recommendedName>
        <fullName>Putative phosphoserine aminotransferase</fullName>
        <ecNumber evidence="1">2.6.1.52</ecNumber>
    </recommendedName>
    <alternativeName>
        <fullName evidence="1">Phosphohydroxythreonine aminotransferase</fullName>
        <shortName evidence="1">PSAT</shortName>
    </alternativeName>
</protein>
<accession>Q1B3G6</accession>